<evidence type="ECO:0000250" key="1"/>
<evidence type="ECO:0000250" key="2">
    <source>
        <dbReference type="UniProtKB" id="P17349"/>
    </source>
</evidence>
<evidence type="ECO:0000250" key="3">
    <source>
        <dbReference type="UniProtKB" id="Q0NZX5"/>
    </source>
</evidence>
<evidence type="ECO:0000255" key="4"/>
<evidence type="ECO:0000255" key="5">
    <source>
        <dbReference type="PROSITE-ProRule" id="PRU00068"/>
    </source>
</evidence>
<evidence type="ECO:0000255" key="6">
    <source>
        <dbReference type="PROSITE-ProRule" id="PRU00276"/>
    </source>
</evidence>
<evidence type="ECO:0000269" key="7">
    <source>
    </source>
</evidence>
<evidence type="ECO:0000269" key="8">
    <source>
    </source>
</evidence>
<evidence type="ECO:0000269" key="9">
    <source>
    </source>
</evidence>
<evidence type="ECO:0000269" key="10">
    <source>
    </source>
</evidence>
<evidence type="ECO:0000269" key="11">
    <source>
    </source>
</evidence>
<evidence type="ECO:0000303" key="12">
    <source>
    </source>
</evidence>
<evidence type="ECO:0000303" key="13">
    <source>
    </source>
</evidence>
<evidence type="ECO:0000303" key="14">
    <source>
    </source>
</evidence>
<evidence type="ECO:0000303" key="15">
    <source>
    </source>
</evidence>
<evidence type="ECO:0000303" key="16">
    <source>
    </source>
</evidence>
<evidence type="ECO:0000303" key="17">
    <source>
    </source>
</evidence>
<evidence type="ECO:0000303" key="18">
    <source ref="2"/>
</evidence>
<evidence type="ECO:0000305" key="19"/>
<evidence type="ECO:0000305" key="20">
    <source>
    </source>
</evidence>
<evidence type="ECO:0000305" key="21">
    <source>
    </source>
</evidence>
<evidence type="ECO:0000305" key="22">
    <source>
    </source>
</evidence>
<evidence type="ECO:0000305" key="23">
    <source>
    </source>
</evidence>
<evidence type="ECO:0000305" key="24">
    <source>
    </source>
</evidence>
<evidence type="ECO:0000312" key="25">
    <source>
        <dbReference type="EMBL" id="CAA62600.1"/>
    </source>
</evidence>
<evidence type="ECO:0000312" key="26">
    <source>
        <dbReference type="PDB" id="1KUF"/>
    </source>
</evidence>
<evidence type="ECO:0000312" key="27">
    <source>
        <dbReference type="PDB" id="1KUG"/>
    </source>
</evidence>
<evidence type="ECO:0000312" key="28">
    <source>
        <dbReference type="PDB" id="1KUI"/>
    </source>
</evidence>
<evidence type="ECO:0000312" key="29">
    <source>
        <dbReference type="PDB" id="1KUK"/>
    </source>
</evidence>
<evidence type="ECO:0007744" key="30">
    <source>
        <dbReference type="PDB" id="1KUF"/>
    </source>
</evidence>
<evidence type="ECO:0007744" key="31">
    <source>
        <dbReference type="PDB" id="1KUG"/>
    </source>
</evidence>
<evidence type="ECO:0007744" key="32">
    <source>
        <dbReference type="PDB" id="1KUI"/>
    </source>
</evidence>
<evidence type="ECO:0007744" key="33">
    <source>
        <dbReference type="PDB" id="1KUK"/>
    </source>
</evidence>
<evidence type="ECO:0007829" key="34">
    <source>
        <dbReference type="PDB" id="1KUF"/>
    </source>
</evidence>
<proteinExistence type="evidence at protein level"/>
<reference key="1">
    <citation type="journal article" date="1995" name="Biochem. Biophys. Res. Commun.">
        <title>Characterization of multiple metalloproteinases with fibrinogenolytic activity from the venom of Taiwan habu (Trimeresurus mucrosquamatus): protein microsequencing coupled with cDNA sequence analysis.</title>
        <authorList>
            <person name="Huang K.F."/>
            <person name="Hung C.C."/>
            <person name="Pan F.M."/>
            <person name="Chow L.P."/>
            <person name="Tsugita A."/>
            <person name="Chiou S.H."/>
        </authorList>
    </citation>
    <scope>NUCLEOTIDE SEQUENCE [MRNA]</scope>
    <scope>PROTEIN SEQUENCE OF 411-442</scope>
    <scope>FUNCTION</scope>
    <scope>PYROGLUTAMATE FORMATION AT GLU-190</scope>
    <scope>SUBUNIT</scope>
    <scope>SUBCELLULAR LOCATION</scope>
    <source>
        <tissue>Venom</tissue>
        <tissue>Venom gland</tissue>
    </source>
</reference>
<reference key="2">
    <citation type="submission" date="1997-06" db="EMBL/GenBank/DDBJ databases">
        <title>Cloning and expression of a trimutase gene from Taiwan habu (Trimeresurus mucrosquamatus).</title>
        <authorList>
            <person name="Guo Y."/>
            <person name="Chang T."/>
            <person name="Lai C."/>
        </authorList>
    </citation>
    <scope>NUCLEOTIDE SEQUENCE [MRNA]</scope>
    <source>
        <tissue>Venom gland</tissue>
    </source>
</reference>
<reference key="3">
    <citation type="journal article" date="1994" name="Biochim. Biophys. Acta">
        <title>Characterization of a cDNA encoding the precursor of platelet aggregation inhibition and metalloproteinase from Trimeresurus mucrosquamatus venom.</title>
        <authorList>
            <person name="Tsai I.H."/>
            <person name="Wang Y.M."/>
            <person name="Lee Y.H."/>
        </authorList>
    </citation>
    <scope>NUCLEOTIDE SEQUENCE [MRNA]</scope>
    <source>
        <tissue>Venom gland</tissue>
    </source>
</reference>
<reference key="4">
    <citation type="submission" date="2002-06" db="EMBL/GenBank/DDBJ databases">
        <title>Cloning and functional expression of a non-hemorrhagic thrombolytic enzyme from Taiwan habu.</title>
        <authorList>
            <person name="Guo Y.-W."/>
            <person name="Ho P.-H."/>
        </authorList>
    </citation>
    <scope>NUCLEOTIDE SEQUENCE [MRNA] OF 190-392</scope>
</reference>
<reference key="5">
    <citation type="journal article" date="1993" name="Biochem. Mol. Biol. Int.">
        <title>Characterization of three fibrinogenolytic proteases isolated from the venom of Taiwan habu (Trimeresurus mucrosquamatus).</title>
        <authorList>
            <person name="Huang K.-F."/>
            <person name="Hung C.C."/>
            <person name="Chiou S.-H."/>
        </authorList>
    </citation>
    <scope>FUNCTION</scope>
    <scope>ACTIVITY REGULATION</scope>
    <scope>SUBUNIT</scope>
    <scope>SUBCELLULAR LOCATION</scope>
    <scope>PYROGLUTAMATE FORMATION AT GLU-190</scope>
    <source>
        <tissue>Venom</tissue>
    </source>
</reference>
<reference key="6">
    <citation type="journal article" date="1998" name="Biochem. Biophys. Res. Commun.">
        <title>Characterization of three endogenous peptide inhibitors for multiple metalloproteinases with fibrinogenolytic activity from the venom of Taiwan habu (Trimeresurus mucrosquamatus).</title>
        <authorList>
            <person name="Huang K.F."/>
            <person name="Hung C.C."/>
            <person name="Wu S.H."/>
            <person name="Chiou S.H."/>
        </authorList>
    </citation>
    <scope>ACTIVITY REGULATION</scope>
</reference>
<reference evidence="26" key="7">
    <citation type="journal article" date="2002" name="Acta Crystallogr. D">
        <title>The 1.35 A structure of cadmium-substituted TM-3, a snake-venom metalloproteinase from Taiwan habu: elucidation of a TNFalpha-converting enzyme-like active-site structure with a distorted octahedral geometry of cadmium.</title>
        <authorList>
            <person name="Huang K.-F."/>
            <person name="Chiou S.-H."/>
            <person name="Ko T.-P."/>
            <person name="Yuann J.M."/>
            <person name="Wang A.H.-J."/>
        </authorList>
    </citation>
    <scope>X-RAY CRYSTALLOGRAPHY (1.35 ANGSTROMS) OF 190-392</scope>
    <scope>METAL-BINDING SITES</scope>
    <scope>DISULFIDE BONDS</scope>
</reference>
<reference evidence="27 28 29" key="8">
    <citation type="journal article" date="2002" name="Eur. J. Biochem.">
        <title>Determinants of the inhibition of a Taiwan habu venom metalloproteinase by its endogenous inhibitors revealed by X-ray crystallography and synthetic inhibitor analogues.</title>
        <authorList>
            <person name="Huang K.-F."/>
            <person name="Chiou S.-H."/>
            <person name="Ko T.-P."/>
            <person name="Wang A.H.-J."/>
        </authorList>
    </citation>
    <scope>X-RAY CRYSTALLOGRAPHY (1.37 ANGSTROMS) OF 190-392 IN COMPLEX WITH ENDOGENOUS TRIPEPTIDE INHIBITORS</scope>
    <scope>METAL-BINDING SITES</scope>
    <scope>DISULFIDE BONDS</scope>
    <scope>ACTIVITY REGULATION</scope>
</reference>
<feature type="signal peptide" evidence="4">
    <location>
        <begin position="1"/>
        <end position="20"/>
    </location>
</feature>
<feature type="propeptide" id="PRO_0000322612">
    <location>
        <begin position="21"/>
        <end position="189"/>
    </location>
</feature>
<feature type="chain" id="PRO_5000053304" description="Snake venom metalloproteinase TM-3">
    <location>
        <begin position="190"/>
        <end position="392"/>
    </location>
</feature>
<feature type="propeptide" id="PRO_0000322613" evidence="1">
    <location>
        <begin position="393"/>
        <end position="410"/>
    </location>
</feature>
<feature type="chain" id="PRO_0000322614" description="Disintegrin trimucrin" evidence="23">
    <location>
        <begin position="411"/>
        <end position="481"/>
    </location>
</feature>
<feature type="domain" description="Peptidase M12B" evidence="6">
    <location>
        <begin position="197"/>
        <end position="392"/>
    </location>
</feature>
<feature type="domain" description="Disintegrin" evidence="5">
    <location>
        <begin position="400"/>
        <end position="481"/>
    </location>
</feature>
<feature type="short sequence motif" description="Cell attachment site">
    <location>
        <begin position="459"/>
        <end position="461"/>
    </location>
</feature>
<feature type="active site" evidence="6">
    <location>
        <position position="334"/>
    </location>
</feature>
<feature type="binding site" evidence="7 31 33">
    <location>
        <begin position="296"/>
        <end position="299"/>
    </location>
    <ligand>
        <name>an L-amino acid tripeptide</name>
        <dbReference type="ChEBI" id="CHEBI:155837"/>
        <note>endogenous tripeptide inhibitor</note>
    </ligand>
</feature>
<feature type="binding site" evidence="7 8 30 31 32 33">
    <location>
        <position position="333"/>
    </location>
    <ligand>
        <name>Zn(2+)</name>
        <dbReference type="ChEBI" id="CHEBI:29105"/>
        <note>catalytic</note>
    </ligand>
</feature>
<feature type="binding site" evidence="7 8 30 31 32 33">
    <location>
        <position position="337"/>
    </location>
    <ligand>
        <name>Zn(2+)</name>
        <dbReference type="ChEBI" id="CHEBI:29105"/>
        <note>catalytic</note>
    </ligand>
</feature>
<feature type="binding site" evidence="7 8 30 31 32 33">
    <location>
        <position position="343"/>
    </location>
    <ligand>
        <name>Zn(2+)</name>
        <dbReference type="ChEBI" id="CHEBI:29105"/>
        <note>catalytic</note>
    </ligand>
</feature>
<feature type="binding site" evidence="7 31 33">
    <location>
        <position position="357"/>
    </location>
    <ligand>
        <name>an L-amino acid tripeptide</name>
        <dbReference type="ChEBI" id="CHEBI:155837"/>
        <note>endogenous tripeptide inhibitor</note>
    </ligand>
</feature>
<feature type="modified residue" description="Pyrrolidone carboxylic acid (Glu)" evidence="22 24">
    <location>
        <position position="190"/>
    </location>
</feature>
<feature type="disulfide bond" evidence="7 8 30 31 32 33">
    <location>
        <begin position="308"/>
        <end position="387"/>
    </location>
</feature>
<feature type="disulfide bond" evidence="7 8 30 31 32 33">
    <location>
        <begin position="349"/>
        <end position="371"/>
    </location>
</feature>
<feature type="disulfide bond" evidence="7 8 30 31 32 33">
    <location>
        <begin position="351"/>
        <end position="354"/>
    </location>
</feature>
<feature type="disulfide bond" evidence="3">
    <location>
        <begin position="414"/>
        <end position="429"/>
    </location>
</feature>
<feature type="disulfide bond" evidence="3">
    <location>
        <begin position="416"/>
        <end position="424"/>
    </location>
</feature>
<feature type="disulfide bond" evidence="3">
    <location>
        <begin position="423"/>
        <end position="446"/>
    </location>
</feature>
<feature type="disulfide bond" evidence="3">
    <location>
        <begin position="437"/>
        <end position="443"/>
    </location>
</feature>
<feature type="disulfide bond" evidence="3">
    <location>
        <begin position="442"/>
        <end position="467"/>
    </location>
</feature>
<feature type="disulfide bond" evidence="3 5">
    <location>
        <begin position="455"/>
        <end position="474"/>
    </location>
</feature>
<feature type="sequence conflict" description="In Ref. 1; CAA62600 and 3; CAA54364." evidence="19" ref="1 3">
    <original>E</original>
    <variation>Q</variation>
    <location>
        <position position="3"/>
    </location>
</feature>
<feature type="sequence conflict" description="In Ref. 3; CAA54364." evidence="19" ref="3">
    <original>V</original>
    <variation>M</variation>
    <location>
        <position position="7"/>
    </location>
</feature>
<feature type="sequence conflict" description="In Ref. 1; CAA62600." evidence="19" ref="1">
    <original>S</original>
    <variation>C</variation>
    <location>
        <position position="20"/>
    </location>
</feature>
<feature type="sequence conflict" description="In Ref. 1; CAA62600 and 3; CAA54364." evidence="19" ref="1 3">
    <original>N</original>
    <variation>D</variation>
    <location>
        <position position="29"/>
    </location>
</feature>
<feature type="sequence conflict" description="In Ref. 3; CAA54364." evidence="19" ref="3">
    <original>R</original>
    <variation>A</variation>
    <location>
        <position position="37"/>
    </location>
</feature>
<feature type="sequence conflict" description="In Ref. 1; CAA62600 and 3; CAA54364." evidence="19" ref="1 3">
    <original>S</original>
    <variation>T</variation>
    <location>
        <position position="40"/>
    </location>
</feature>
<feature type="sequence conflict" description="In Ref. 1; CAA62600." evidence="19" ref="1">
    <original>E</original>
    <variation>G</variation>
    <location>
        <position position="64"/>
    </location>
</feature>
<feature type="sequence conflict" description="In Ref. 1; CAA62600." evidence="19" ref="1">
    <original>P</original>
    <variation>L</variation>
    <location>
        <position position="137"/>
    </location>
</feature>
<feature type="sequence conflict" description="In Ref. 1; CAA62600." evidence="19" ref="1">
    <original>K</original>
    <variation>E</variation>
    <location>
        <position position="200"/>
    </location>
</feature>
<feature type="sequence conflict" description="In Ref. 1; CAA62600." evidence="19" ref="1">
    <original>Y</original>
    <variation>H</variation>
    <location>
        <position position="210"/>
    </location>
</feature>
<feature type="sequence conflict" description="In Ref. 1; CAA62600." evidence="19" ref="1">
    <original>I</original>
    <variation>M</variation>
    <location>
        <position position="231"/>
    </location>
</feature>
<feature type="sequence conflict" description="In Ref. 1; CAA62600." evidence="19" ref="1">
    <original>A</original>
    <variation>P</variation>
    <location>
        <position position="358"/>
    </location>
</feature>
<feature type="sequence conflict" description="In Ref. 3; CAA54364." evidence="19" ref="3">
    <original>F</original>
    <variation>S</variation>
    <location>
        <position position="368"/>
    </location>
</feature>
<feature type="sequence conflict" description="In Ref. 1; CAA62600." evidence="19" ref="1">
    <original>C</original>
    <variation>S</variation>
    <location>
        <position position="467"/>
    </location>
</feature>
<feature type="strand" evidence="34">
    <location>
        <begin position="197"/>
        <end position="205"/>
    </location>
</feature>
<feature type="helix" evidence="34">
    <location>
        <begin position="207"/>
        <end position="212"/>
    </location>
</feature>
<feature type="turn" evidence="34">
    <location>
        <begin position="213"/>
        <end position="215"/>
    </location>
</feature>
<feature type="helix" evidence="34">
    <location>
        <begin position="217"/>
        <end position="235"/>
    </location>
</feature>
<feature type="helix" evidence="34">
    <location>
        <begin position="236"/>
        <end position="238"/>
    </location>
</feature>
<feature type="strand" evidence="34">
    <location>
        <begin position="240"/>
        <end position="249"/>
    </location>
</feature>
<feature type="helix" evidence="34">
    <location>
        <begin position="262"/>
        <end position="275"/>
    </location>
</feature>
<feature type="helix" evidence="34">
    <location>
        <begin position="277"/>
        <end position="280"/>
    </location>
</feature>
<feature type="strand" evidence="34">
    <location>
        <begin position="284"/>
        <end position="290"/>
    </location>
</feature>
<feature type="helix" evidence="34">
    <location>
        <begin position="295"/>
        <end position="297"/>
    </location>
</feature>
<feature type="strand" evidence="34">
    <location>
        <begin position="300"/>
        <end position="302"/>
    </location>
</feature>
<feature type="turn" evidence="34">
    <location>
        <begin position="310"/>
        <end position="312"/>
    </location>
</feature>
<feature type="strand" evidence="34">
    <location>
        <begin position="313"/>
        <end position="318"/>
    </location>
</feature>
<feature type="helix" evidence="34">
    <location>
        <begin position="324"/>
        <end position="338"/>
    </location>
</feature>
<feature type="turn" evidence="34">
    <location>
        <begin position="346"/>
        <end position="348"/>
    </location>
</feature>
<feature type="strand" evidence="34">
    <location>
        <begin position="352"/>
        <end position="354"/>
    </location>
</feature>
<feature type="helix" evidence="34">
    <location>
        <begin position="370"/>
        <end position="382"/>
    </location>
</feature>
<feature type="helix" evidence="34">
    <location>
        <begin position="386"/>
        <end position="389"/>
    </location>
</feature>
<name>VM2T3_PROMU</name>
<dbReference type="EC" id="3.4.24.-"/>
<dbReference type="EMBL" id="AF011909">
    <property type="protein sequence ID" value="AAB94016.1"/>
    <property type="molecule type" value="mRNA"/>
</dbReference>
<dbReference type="EMBL" id="X77089">
    <property type="protein sequence ID" value="CAA54364.1"/>
    <property type="molecule type" value="mRNA"/>
</dbReference>
<dbReference type="EMBL" id="AF519177">
    <property type="protein sequence ID" value="AAP80728.1"/>
    <property type="molecule type" value="mRNA"/>
</dbReference>
<dbReference type="EMBL" id="X91190">
    <property type="protein sequence ID" value="CAA62600.1"/>
    <property type="status" value="ALT_INIT"/>
    <property type="molecule type" value="mRNA"/>
</dbReference>
<dbReference type="PIR" id="JC4342">
    <property type="entry name" value="JC4342"/>
</dbReference>
<dbReference type="PIR" id="S47570">
    <property type="entry name" value="S43125"/>
</dbReference>
<dbReference type="RefSeq" id="NP_001310177.1">
    <property type="nucleotide sequence ID" value="NM_001323248.1"/>
</dbReference>
<dbReference type="PDB" id="1KUF">
    <property type="method" value="X-ray"/>
    <property type="resolution" value="1.35 A"/>
    <property type="chains" value="A=190-392"/>
</dbReference>
<dbReference type="PDB" id="1KUG">
    <property type="method" value="X-ray"/>
    <property type="resolution" value="1.37 A"/>
    <property type="chains" value="A=190-392"/>
</dbReference>
<dbReference type="PDB" id="1KUI">
    <property type="method" value="X-ray"/>
    <property type="resolution" value="1.50 A"/>
    <property type="chains" value="A=190-392"/>
</dbReference>
<dbReference type="PDB" id="1KUK">
    <property type="method" value="X-ray"/>
    <property type="resolution" value="1.45 A"/>
    <property type="chains" value="A=190-392"/>
</dbReference>
<dbReference type="PDBsum" id="1KUF"/>
<dbReference type="PDBsum" id="1KUG"/>
<dbReference type="PDBsum" id="1KUI"/>
<dbReference type="PDBsum" id="1KUK"/>
<dbReference type="SMR" id="O57413"/>
<dbReference type="MEROPS" id="M12.157"/>
<dbReference type="MEROPS" id="M12.242"/>
<dbReference type="GeneID" id="107298299"/>
<dbReference type="KEGG" id="pmur:107298299"/>
<dbReference type="OrthoDB" id="6425579at2759"/>
<dbReference type="EvolutionaryTrace" id="O57413"/>
<dbReference type="GO" id="GO:0005576">
    <property type="term" value="C:extracellular region"/>
    <property type="evidence" value="ECO:0007669"/>
    <property type="project" value="UniProtKB-SubCell"/>
</dbReference>
<dbReference type="GO" id="GO:0005886">
    <property type="term" value="C:plasma membrane"/>
    <property type="evidence" value="ECO:0007669"/>
    <property type="project" value="TreeGrafter"/>
</dbReference>
<dbReference type="GO" id="GO:0046872">
    <property type="term" value="F:metal ion binding"/>
    <property type="evidence" value="ECO:0007669"/>
    <property type="project" value="UniProtKB-KW"/>
</dbReference>
<dbReference type="GO" id="GO:0004222">
    <property type="term" value="F:metalloendopeptidase activity"/>
    <property type="evidence" value="ECO:0007669"/>
    <property type="project" value="InterPro"/>
</dbReference>
<dbReference type="GO" id="GO:0090729">
    <property type="term" value="F:toxin activity"/>
    <property type="evidence" value="ECO:0007669"/>
    <property type="project" value="UniProtKB-KW"/>
</dbReference>
<dbReference type="GO" id="GO:0006508">
    <property type="term" value="P:proteolysis"/>
    <property type="evidence" value="ECO:0007669"/>
    <property type="project" value="UniProtKB-KW"/>
</dbReference>
<dbReference type="CDD" id="cd04269">
    <property type="entry name" value="ZnMc_adamalysin_II_like"/>
    <property type="match status" value="1"/>
</dbReference>
<dbReference type="FunFam" id="3.40.390.10:FF:000002">
    <property type="entry name" value="Disintegrin and metalloproteinase domain-containing protein 22"/>
    <property type="match status" value="1"/>
</dbReference>
<dbReference type="FunFam" id="4.10.70.10:FF:000005">
    <property type="entry name" value="Zinc metalloproteinase/disintegrin"/>
    <property type="match status" value="1"/>
</dbReference>
<dbReference type="Gene3D" id="3.40.390.10">
    <property type="entry name" value="Collagenase (Catalytic Domain)"/>
    <property type="match status" value="1"/>
</dbReference>
<dbReference type="Gene3D" id="4.10.70.10">
    <property type="entry name" value="Disintegrin domain"/>
    <property type="match status" value="1"/>
</dbReference>
<dbReference type="InterPro" id="IPR018358">
    <property type="entry name" value="Disintegrin_CS"/>
</dbReference>
<dbReference type="InterPro" id="IPR001762">
    <property type="entry name" value="Disintegrin_dom"/>
</dbReference>
<dbReference type="InterPro" id="IPR036436">
    <property type="entry name" value="Disintegrin_dom_sf"/>
</dbReference>
<dbReference type="InterPro" id="IPR024079">
    <property type="entry name" value="MetalloPept_cat_dom_sf"/>
</dbReference>
<dbReference type="InterPro" id="IPR001590">
    <property type="entry name" value="Peptidase_M12B"/>
</dbReference>
<dbReference type="InterPro" id="IPR002870">
    <property type="entry name" value="Peptidase_M12B_N"/>
</dbReference>
<dbReference type="InterPro" id="IPR034027">
    <property type="entry name" value="Reprolysin_adamalysin"/>
</dbReference>
<dbReference type="PANTHER" id="PTHR11905">
    <property type="entry name" value="ADAM A DISINTEGRIN AND METALLOPROTEASE DOMAIN"/>
    <property type="match status" value="1"/>
</dbReference>
<dbReference type="PANTHER" id="PTHR11905:SF32">
    <property type="entry name" value="DISINTEGRIN AND METALLOPROTEINASE DOMAIN-CONTAINING PROTEIN 28"/>
    <property type="match status" value="1"/>
</dbReference>
<dbReference type="Pfam" id="PF00200">
    <property type="entry name" value="Disintegrin"/>
    <property type="match status" value="1"/>
</dbReference>
<dbReference type="Pfam" id="PF01562">
    <property type="entry name" value="Pep_M12B_propep"/>
    <property type="match status" value="1"/>
</dbReference>
<dbReference type="Pfam" id="PF01421">
    <property type="entry name" value="Reprolysin"/>
    <property type="match status" value="1"/>
</dbReference>
<dbReference type="PRINTS" id="PR00289">
    <property type="entry name" value="DISINTEGRIN"/>
</dbReference>
<dbReference type="SMART" id="SM00050">
    <property type="entry name" value="DISIN"/>
    <property type="match status" value="1"/>
</dbReference>
<dbReference type="SUPFAM" id="SSF57552">
    <property type="entry name" value="Blood coagulation inhibitor (disintegrin)"/>
    <property type="match status" value="1"/>
</dbReference>
<dbReference type="SUPFAM" id="SSF55486">
    <property type="entry name" value="Metalloproteases ('zincins'), catalytic domain"/>
    <property type="match status" value="1"/>
</dbReference>
<dbReference type="PROSITE" id="PS50215">
    <property type="entry name" value="ADAM_MEPRO"/>
    <property type="match status" value="1"/>
</dbReference>
<dbReference type="PROSITE" id="PS00427">
    <property type="entry name" value="DISINTEGRIN_1"/>
    <property type="match status" value="1"/>
</dbReference>
<dbReference type="PROSITE" id="PS50214">
    <property type="entry name" value="DISINTEGRIN_2"/>
    <property type="match status" value="1"/>
</dbReference>
<dbReference type="PROSITE" id="PS00142">
    <property type="entry name" value="ZINC_PROTEASE"/>
    <property type="match status" value="1"/>
</dbReference>
<comment type="function">
    <molecule>Snake venom metalloproteinase TM-3</molecule>
    <text evidence="8 9 10 11">Potent fibrinogenolytic protease which cleaves mainly the Aalpha chain of fibrinogen (FGA) and slightly the Bbeta (FGB) and the gamma (FGG) chains (PubMed:7488093, PubMed:8193588). May possess hemorrhagic activity (PubMed:7488093). Compared to other SVMP, the substrate-binding pocket is relatively shallow (PubMed:12077431). Is less susceptible to tripeptide inhibitors than TM-1 (AC U3KRG1) and TM-2 (PubMed:9703966).</text>
</comment>
<comment type="function">
    <molecule>Disintegrin trimucrin</molecule>
    <text evidence="2">Inhibits platelet aggregation induced by ADP, thrombin, platelet-activating factor and collagen. Acts by inhibiting fibrinogen interaction with platelet receptors GPIIb/GPIIIa (ITGA2B/ITGB3).</text>
</comment>
<comment type="cofactor">
    <cofactor evidence="20 21">
        <name>Zn(2+)</name>
        <dbReference type="ChEBI" id="CHEBI:29105"/>
    </cofactor>
    <text evidence="7 8">Binds 1 zinc ion per subunit.</text>
</comment>
<comment type="activity regulation">
    <text evidence="7 10 11">Inhibited by EDTA and 1,10-phenanthroline (PubMed:8193588). Is also inhibited by endogenous tripeptide inhibitors pyroGlu-Asn-Trp, pyroGlu-Gln-Trp, and pyroGlu-Lys-Trp (PubMed:12071970, PubMed:9703966).</text>
</comment>
<comment type="subunit">
    <text evidence="9 10">Monomer.</text>
</comment>
<comment type="subcellular location">
    <subcellularLocation>
        <location evidence="9 10">Secreted</location>
    </subcellularLocation>
</comment>
<comment type="tissue specificity">
    <text evidence="22 24">Expressed by the venom gland.</text>
</comment>
<comment type="PTM">
    <text evidence="9">The N-terminus is blocked.</text>
</comment>
<comment type="miscellaneous">
    <text>This disintegrin is 100% identical to the disintegrin of AC E9NW27, another disintegrin of the P-II subfamily of Protobothrops mucrosquamatus.</text>
</comment>
<comment type="miscellaneous">
    <text>The disintegrin belongs to the medium disintegrin subfamily.</text>
</comment>
<comment type="similarity">
    <text evidence="19">Belongs to the venom metalloproteinase (M12B) family. P-II subfamily. P-IIa sub-subfamily.</text>
</comment>
<comment type="sequence caution" evidence="19">
    <conflict type="erroneous initiation">
        <sequence resource="EMBL-CDS" id="CAA62600"/>
    </conflict>
    <text>Extended N-terminus.</text>
</comment>
<accession>O57413</accession>
<accession>Q7T1S1</accession>
<accession>Q91505</accession>
<accession>Q92119</accession>
<protein>
    <recommendedName>
        <fullName>Zinc metalloproteinase/disintegrin</fullName>
    </recommendedName>
    <component>
        <recommendedName>
            <fullName evidence="12 13 14 16 17">Snake venom metalloproteinase TM-3</fullName>
            <shortName>SVMP</shortName>
            <ecNumber>3.4.24.-</ecNumber>
        </recommendedName>
        <alternativeName>
            <fullName evidence="25">Atrolysin e</fullName>
        </alternativeName>
        <alternativeName>
            <fullName>Fibrinlysin</fullName>
        </alternativeName>
        <alternativeName>
            <fullName evidence="18">Trimutase</fullName>
        </alternativeName>
    </component>
    <component>
        <recommendedName>
            <fullName evidence="15">Disintegrin trimucrin</fullName>
        </recommendedName>
    </component>
</protein>
<keyword id="KW-0002">3D-structure</keyword>
<keyword id="KW-1217">Cell adhesion impairing toxin</keyword>
<keyword id="KW-0903">Direct protein sequencing</keyword>
<keyword id="KW-1015">Disulfide bond</keyword>
<keyword id="KW-1206">Fibrinogenolytic toxin</keyword>
<keyword id="KW-1205">Fibrinolytic toxin</keyword>
<keyword id="KW-1200">Hemorrhagic toxin</keyword>
<keyword id="KW-1199">Hemostasis impairing toxin</keyword>
<keyword id="KW-0378">Hydrolase</keyword>
<keyword id="KW-0479">Metal-binding</keyword>
<keyword id="KW-0482">Metalloprotease</keyword>
<keyword id="KW-1201">Platelet aggregation inhibiting toxin</keyword>
<keyword id="KW-0645">Protease</keyword>
<keyword id="KW-0873">Pyrrolidone carboxylic acid</keyword>
<keyword id="KW-0964">Secreted</keyword>
<keyword id="KW-0732">Signal</keyword>
<keyword id="KW-0800">Toxin</keyword>
<keyword id="KW-0862">Zinc</keyword>
<keyword id="KW-0865">Zymogen</keyword>
<sequence>MIEVLLVTICLAVFPYQGSSIILESGNVNDYEVVYPRKVSALPKGAVQPKYEDAMQYEFKVNGEAVVLHLEKNKGLFSEDYSETHYSPDGREITTYPSVEDHCYYHGRIHNDADSTASISACDGLKGYFKLQGETYPIEPLELSDSEAHAVFKYENVEKEDEAPKMCGVTQNWESDESIKKASQLYLTPEQQRFPQRYIKLAIVVDHGMYTKYSSNFKKIRKRVHQMVSNINEMCRPLNIAITLALLDVWSEKDFITVQADAPTTAGLFGDWRERVLLKKKNHDHAQLLTDTNFARNTIGWAYVGRMCDEKYSVAVVKDHSSKVFMVAVTMTHELGHNLGMEHDDKDKCKCDTCIMSAVISDKQSKLFSDCSKDYYQTFLTNDNPQCILNAPLRTDTVSTPVSGNEFLEAGEECDCGSPENPCCDAATCKLRPGAQCAEGLCCDQCRFKKKRTICRRARGDNPDDRCTGQSADCPRNGLYG</sequence>
<organism>
    <name type="scientific">Protobothrops mucrosquamatus</name>
    <name type="common">Taiwan habu</name>
    <name type="synonym">Trimeresurus mucrosquamatus</name>
    <dbReference type="NCBI Taxonomy" id="103944"/>
    <lineage>
        <taxon>Eukaryota</taxon>
        <taxon>Metazoa</taxon>
        <taxon>Chordata</taxon>
        <taxon>Craniata</taxon>
        <taxon>Vertebrata</taxon>
        <taxon>Euteleostomi</taxon>
        <taxon>Lepidosauria</taxon>
        <taxon>Squamata</taxon>
        <taxon>Bifurcata</taxon>
        <taxon>Unidentata</taxon>
        <taxon>Episquamata</taxon>
        <taxon>Toxicofera</taxon>
        <taxon>Serpentes</taxon>
        <taxon>Colubroidea</taxon>
        <taxon>Viperidae</taxon>
        <taxon>Crotalinae</taxon>
        <taxon>Protobothrops</taxon>
    </lineage>
</organism>